<comment type="subunit">
    <text evidence="1">Component of the mitochondrial ribosome large subunit (39S) which comprises a 16S rRNA and about 50 distinct proteins.</text>
</comment>
<comment type="subcellular location">
    <subcellularLocation>
        <location evidence="1">Mitochondrion</location>
    </subcellularLocation>
</comment>
<comment type="alternative products">
    <event type="alternative splicing"/>
    <isoform>
        <id>Q9D0Y8-1</id>
        <name>1</name>
        <sequence type="displayed"/>
    </isoform>
    <isoform>
        <id>Q9D0Y8-2</id>
        <name>2</name>
        <sequence type="described" ref="VSP_022476"/>
    </isoform>
</comment>
<comment type="similarity">
    <text evidence="5">Belongs to the mitochondrion-specific ribosomal protein mL52 family.</text>
</comment>
<reference key="1">
    <citation type="journal article" date="2005" name="Science">
        <title>The transcriptional landscape of the mammalian genome.</title>
        <authorList>
            <person name="Carninci P."/>
            <person name="Kasukawa T."/>
            <person name="Katayama S."/>
            <person name="Gough J."/>
            <person name="Frith M.C."/>
            <person name="Maeda N."/>
            <person name="Oyama R."/>
            <person name="Ravasi T."/>
            <person name="Lenhard B."/>
            <person name="Wells C."/>
            <person name="Kodzius R."/>
            <person name="Shimokawa K."/>
            <person name="Bajic V.B."/>
            <person name="Brenner S.E."/>
            <person name="Batalov S."/>
            <person name="Forrest A.R."/>
            <person name="Zavolan M."/>
            <person name="Davis M.J."/>
            <person name="Wilming L.G."/>
            <person name="Aidinis V."/>
            <person name="Allen J.E."/>
            <person name="Ambesi-Impiombato A."/>
            <person name="Apweiler R."/>
            <person name="Aturaliya R.N."/>
            <person name="Bailey T.L."/>
            <person name="Bansal M."/>
            <person name="Baxter L."/>
            <person name="Beisel K.W."/>
            <person name="Bersano T."/>
            <person name="Bono H."/>
            <person name="Chalk A.M."/>
            <person name="Chiu K.P."/>
            <person name="Choudhary V."/>
            <person name="Christoffels A."/>
            <person name="Clutterbuck D.R."/>
            <person name="Crowe M.L."/>
            <person name="Dalla E."/>
            <person name="Dalrymple B.P."/>
            <person name="de Bono B."/>
            <person name="Della Gatta G."/>
            <person name="di Bernardo D."/>
            <person name="Down T."/>
            <person name="Engstrom P."/>
            <person name="Fagiolini M."/>
            <person name="Faulkner G."/>
            <person name="Fletcher C.F."/>
            <person name="Fukushima T."/>
            <person name="Furuno M."/>
            <person name="Futaki S."/>
            <person name="Gariboldi M."/>
            <person name="Georgii-Hemming P."/>
            <person name="Gingeras T.R."/>
            <person name="Gojobori T."/>
            <person name="Green R.E."/>
            <person name="Gustincich S."/>
            <person name="Harbers M."/>
            <person name="Hayashi Y."/>
            <person name="Hensch T.K."/>
            <person name="Hirokawa N."/>
            <person name="Hill D."/>
            <person name="Huminiecki L."/>
            <person name="Iacono M."/>
            <person name="Ikeo K."/>
            <person name="Iwama A."/>
            <person name="Ishikawa T."/>
            <person name="Jakt M."/>
            <person name="Kanapin A."/>
            <person name="Katoh M."/>
            <person name="Kawasawa Y."/>
            <person name="Kelso J."/>
            <person name="Kitamura H."/>
            <person name="Kitano H."/>
            <person name="Kollias G."/>
            <person name="Krishnan S.P."/>
            <person name="Kruger A."/>
            <person name="Kummerfeld S.K."/>
            <person name="Kurochkin I.V."/>
            <person name="Lareau L.F."/>
            <person name="Lazarevic D."/>
            <person name="Lipovich L."/>
            <person name="Liu J."/>
            <person name="Liuni S."/>
            <person name="McWilliam S."/>
            <person name="Madan Babu M."/>
            <person name="Madera M."/>
            <person name="Marchionni L."/>
            <person name="Matsuda H."/>
            <person name="Matsuzawa S."/>
            <person name="Miki H."/>
            <person name="Mignone F."/>
            <person name="Miyake S."/>
            <person name="Morris K."/>
            <person name="Mottagui-Tabar S."/>
            <person name="Mulder N."/>
            <person name="Nakano N."/>
            <person name="Nakauchi H."/>
            <person name="Ng P."/>
            <person name="Nilsson R."/>
            <person name="Nishiguchi S."/>
            <person name="Nishikawa S."/>
            <person name="Nori F."/>
            <person name="Ohara O."/>
            <person name="Okazaki Y."/>
            <person name="Orlando V."/>
            <person name="Pang K.C."/>
            <person name="Pavan W.J."/>
            <person name="Pavesi G."/>
            <person name="Pesole G."/>
            <person name="Petrovsky N."/>
            <person name="Piazza S."/>
            <person name="Reed J."/>
            <person name="Reid J.F."/>
            <person name="Ring B.Z."/>
            <person name="Ringwald M."/>
            <person name="Rost B."/>
            <person name="Ruan Y."/>
            <person name="Salzberg S.L."/>
            <person name="Sandelin A."/>
            <person name="Schneider C."/>
            <person name="Schoenbach C."/>
            <person name="Sekiguchi K."/>
            <person name="Semple C.A."/>
            <person name="Seno S."/>
            <person name="Sessa L."/>
            <person name="Sheng Y."/>
            <person name="Shibata Y."/>
            <person name="Shimada H."/>
            <person name="Shimada K."/>
            <person name="Silva D."/>
            <person name="Sinclair B."/>
            <person name="Sperling S."/>
            <person name="Stupka E."/>
            <person name="Sugiura K."/>
            <person name="Sultana R."/>
            <person name="Takenaka Y."/>
            <person name="Taki K."/>
            <person name="Tammoja K."/>
            <person name="Tan S.L."/>
            <person name="Tang S."/>
            <person name="Taylor M.S."/>
            <person name="Tegner J."/>
            <person name="Teichmann S.A."/>
            <person name="Ueda H.R."/>
            <person name="van Nimwegen E."/>
            <person name="Verardo R."/>
            <person name="Wei C.L."/>
            <person name="Yagi K."/>
            <person name="Yamanishi H."/>
            <person name="Zabarovsky E."/>
            <person name="Zhu S."/>
            <person name="Zimmer A."/>
            <person name="Hide W."/>
            <person name="Bult C."/>
            <person name="Grimmond S.M."/>
            <person name="Teasdale R.D."/>
            <person name="Liu E.T."/>
            <person name="Brusic V."/>
            <person name="Quackenbush J."/>
            <person name="Wahlestedt C."/>
            <person name="Mattick J.S."/>
            <person name="Hume D.A."/>
            <person name="Kai C."/>
            <person name="Sasaki D."/>
            <person name="Tomaru Y."/>
            <person name="Fukuda S."/>
            <person name="Kanamori-Katayama M."/>
            <person name="Suzuki M."/>
            <person name="Aoki J."/>
            <person name="Arakawa T."/>
            <person name="Iida J."/>
            <person name="Imamura K."/>
            <person name="Itoh M."/>
            <person name="Kato T."/>
            <person name="Kawaji H."/>
            <person name="Kawagashira N."/>
            <person name="Kawashima T."/>
            <person name="Kojima M."/>
            <person name="Kondo S."/>
            <person name="Konno H."/>
            <person name="Nakano K."/>
            <person name="Ninomiya N."/>
            <person name="Nishio T."/>
            <person name="Okada M."/>
            <person name="Plessy C."/>
            <person name="Shibata K."/>
            <person name="Shiraki T."/>
            <person name="Suzuki S."/>
            <person name="Tagami M."/>
            <person name="Waki K."/>
            <person name="Watahiki A."/>
            <person name="Okamura-Oho Y."/>
            <person name="Suzuki H."/>
            <person name="Kawai J."/>
            <person name="Hayashizaki Y."/>
        </authorList>
    </citation>
    <scope>NUCLEOTIDE SEQUENCE [LARGE SCALE MRNA] (ISOFORM 1)</scope>
    <source>
        <strain>C57BL/6J</strain>
        <tissue>Bone marrow</tissue>
        <tissue>Lung</tissue>
    </source>
</reference>
<reference key="2">
    <citation type="journal article" date="2004" name="Genome Res.">
        <title>The status, quality, and expansion of the NIH full-length cDNA project: the Mammalian Gene Collection (MGC).</title>
        <authorList>
            <consortium name="The MGC Project Team"/>
        </authorList>
    </citation>
    <scope>NUCLEOTIDE SEQUENCE [LARGE SCALE MRNA] (ISOFORM 2)</scope>
    <source>
        <strain>C57BL/6J</strain>
        <tissue>Mammary gland</tissue>
    </source>
</reference>
<reference key="3">
    <citation type="journal article" date="2010" name="Cell">
        <title>A tissue-specific atlas of mouse protein phosphorylation and expression.</title>
        <authorList>
            <person name="Huttlin E.L."/>
            <person name="Jedrychowski M.P."/>
            <person name="Elias J.E."/>
            <person name="Goswami T."/>
            <person name="Rad R."/>
            <person name="Beausoleil S.A."/>
            <person name="Villen J."/>
            <person name="Haas W."/>
            <person name="Sowa M.E."/>
            <person name="Gygi S.P."/>
        </authorList>
    </citation>
    <scope>IDENTIFICATION BY MASS SPECTROMETRY [LARGE SCALE ANALYSIS]</scope>
    <source>
        <tissue>Kidney</tissue>
    </source>
</reference>
<sequence length="121" mass="13658">MAALGTWLSSVRRLHCSVVARAGGQWRLQQGLAANPSGYGPLTELPDWSFADGRPAPPMKGQLRRKAQREKLARRVVLLTQEMDAGIQAWKLRQQKLQEERKKEHDLKPKGTLLRSPLPNQ</sequence>
<dbReference type="EMBL" id="AK004194">
    <property type="protein sequence ID" value="BAB23216.1"/>
    <property type="molecule type" value="mRNA"/>
</dbReference>
<dbReference type="EMBL" id="AK150806">
    <property type="protein sequence ID" value="BAE29869.1"/>
    <property type="molecule type" value="mRNA"/>
</dbReference>
<dbReference type="EMBL" id="AK151615">
    <property type="protein sequence ID" value="BAE30552.1"/>
    <property type="molecule type" value="mRNA"/>
</dbReference>
<dbReference type="EMBL" id="AK152876">
    <property type="protein sequence ID" value="BAE31561.1"/>
    <property type="molecule type" value="mRNA"/>
</dbReference>
<dbReference type="EMBL" id="AK164629">
    <property type="protein sequence ID" value="BAE37850.1"/>
    <property type="molecule type" value="mRNA"/>
</dbReference>
<dbReference type="EMBL" id="BC028522">
    <property type="protein sequence ID" value="AAH28522.1"/>
    <property type="molecule type" value="mRNA"/>
</dbReference>
<dbReference type="EMBL" id="BC060043">
    <property type="protein sequence ID" value="AAH60043.1"/>
    <property type="molecule type" value="mRNA"/>
</dbReference>
<dbReference type="CCDS" id="CCDS27088.1">
    <molecule id="Q9D0Y8-1"/>
</dbReference>
<dbReference type="RefSeq" id="NP_081127.1">
    <molecule id="Q9D0Y8-1"/>
    <property type="nucleotide sequence ID" value="NM_026851.2"/>
</dbReference>
<dbReference type="SMR" id="Q9D0Y8"/>
<dbReference type="ComplexPortal" id="CPX-5302">
    <property type="entry name" value="39S mitochondrial large ribosomal subunit"/>
</dbReference>
<dbReference type="FunCoup" id="Q9D0Y8">
    <property type="interactions" value="1345"/>
</dbReference>
<dbReference type="STRING" id="10090.ENSMUSP00000010550"/>
<dbReference type="iPTMnet" id="Q9D0Y8"/>
<dbReference type="PhosphoSitePlus" id="Q9D0Y8"/>
<dbReference type="PaxDb" id="10090-ENSMUSP00000010550"/>
<dbReference type="PeptideAtlas" id="Q9D0Y8"/>
<dbReference type="ProteomicsDB" id="300406">
    <molecule id="Q9D0Y8-1"/>
</dbReference>
<dbReference type="ProteomicsDB" id="300407">
    <molecule id="Q9D0Y8-2"/>
</dbReference>
<dbReference type="Pumba" id="Q9D0Y8"/>
<dbReference type="Antibodypedia" id="194">
    <property type="antibodies" value="67 antibodies from 22 providers"/>
</dbReference>
<dbReference type="DNASU" id="68836"/>
<dbReference type="Ensembl" id="ENSMUST00000010550.12">
    <molecule id="Q9D0Y8-1"/>
    <property type="protein sequence ID" value="ENSMUSP00000010550.8"/>
    <property type="gene ID" value="ENSMUSG00000010406.13"/>
</dbReference>
<dbReference type="Ensembl" id="ENSMUST00000199195.3">
    <molecule id="Q9D0Y8-2"/>
    <property type="protein sequence ID" value="ENSMUSP00000142555.2"/>
    <property type="gene ID" value="ENSMUSG00000010406.13"/>
</dbReference>
<dbReference type="GeneID" id="68836"/>
<dbReference type="KEGG" id="mmu:68836"/>
<dbReference type="UCSC" id="uc007tvz.1">
    <molecule id="Q9D0Y8-1"/>
    <property type="organism name" value="mouse"/>
</dbReference>
<dbReference type="AGR" id="MGI:1916086"/>
<dbReference type="CTD" id="122704"/>
<dbReference type="MGI" id="MGI:1916086">
    <property type="gene designation" value="Mrpl52"/>
</dbReference>
<dbReference type="VEuPathDB" id="HostDB:ENSMUSG00000010406"/>
<dbReference type="eggNOG" id="ENOG502S4I0">
    <property type="taxonomic scope" value="Eukaryota"/>
</dbReference>
<dbReference type="GeneTree" id="ENSGT00390000005763"/>
<dbReference type="HOGENOM" id="CLU_135844_0_0_1"/>
<dbReference type="InParanoid" id="Q9D0Y8"/>
<dbReference type="OMA" id="RSIDQKW"/>
<dbReference type="OrthoDB" id="10249237at2759"/>
<dbReference type="PhylomeDB" id="Q9D0Y8"/>
<dbReference type="TreeFam" id="TF323872"/>
<dbReference type="Reactome" id="R-MMU-5389840">
    <property type="pathway name" value="Mitochondrial translation elongation"/>
</dbReference>
<dbReference type="Reactome" id="R-MMU-5419276">
    <property type="pathway name" value="Mitochondrial translation termination"/>
</dbReference>
<dbReference type="BioGRID-ORCS" id="68836">
    <property type="hits" value="22 hits in 80 CRISPR screens"/>
</dbReference>
<dbReference type="ChiTaRS" id="Mrpl52">
    <property type="organism name" value="mouse"/>
</dbReference>
<dbReference type="PRO" id="PR:Q9D0Y8"/>
<dbReference type="Proteomes" id="UP000000589">
    <property type="component" value="Chromosome 14"/>
</dbReference>
<dbReference type="RNAct" id="Q9D0Y8">
    <property type="molecule type" value="protein"/>
</dbReference>
<dbReference type="Bgee" id="ENSMUSG00000010406">
    <property type="expression patterns" value="Expressed in floor plate of midbrain and 266 other cell types or tissues"/>
</dbReference>
<dbReference type="ExpressionAtlas" id="Q9D0Y8">
    <property type="expression patterns" value="baseline and differential"/>
</dbReference>
<dbReference type="GO" id="GO:0005743">
    <property type="term" value="C:mitochondrial inner membrane"/>
    <property type="evidence" value="ECO:0000303"/>
    <property type="project" value="ComplexPortal"/>
</dbReference>
<dbReference type="GO" id="GO:0005762">
    <property type="term" value="C:mitochondrial large ribosomal subunit"/>
    <property type="evidence" value="ECO:0000250"/>
    <property type="project" value="UniProtKB"/>
</dbReference>
<dbReference type="GO" id="GO:0005739">
    <property type="term" value="C:mitochondrion"/>
    <property type="evidence" value="ECO:0007005"/>
    <property type="project" value="MGI"/>
</dbReference>
<dbReference type="GO" id="GO:0005654">
    <property type="term" value="C:nucleoplasm"/>
    <property type="evidence" value="ECO:0007669"/>
    <property type="project" value="Ensembl"/>
</dbReference>
<dbReference type="GO" id="GO:0003735">
    <property type="term" value="F:structural constituent of ribosome"/>
    <property type="evidence" value="ECO:0000250"/>
    <property type="project" value="UniProtKB"/>
</dbReference>
<dbReference type="GO" id="GO:0032543">
    <property type="term" value="P:mitochondrial translation"/>
    <property type="evidence" value="ECO:0000303"/>
    <property type="project" value="ComplexPortal"/>
</dbReference>
<dbReference type="GO" id="GO:0006412">
    <property type="term" value="P:translation"/>
    <property type="evidence" value="ECO:0000250"/>
    <property type="project" value="UniProtKB"/>
</dbReference>
<dbReference type="InterPro" id="IPR034596">
    <property type="entry name" value="Ribosomal_mL52"/>
</dbReference>
<dbReference type="PANTHER" id="PTHR34090">
    <property type="entry name" value="39S RIBOSOMAL PROTEIN L52, MITOCHONDRIAL"/>
    <property type="match status" value="1"/>
</dbReference>
<dbReference type="PANTHER" id="PTHR34090:SF1">
    <property type="entry name" value="LARGE RIBOSOMAL SUBUNIT PROTEIN ML52"/>
    <property type="match status" value="1"/>
</dbReference>
<dbReference type="Pfam" id="PF18699">
    <property type="entry name" value="MRPL52"/>
    <property type="match status" value="1"/>
</dbReference>
<feature type="transit peptide" description="Mitochondrion" evidence="2">
    <location>
        <begin position="1"/>
        <end position="22"/>
    </location>
</feature>
<feature type="chain" id="PRO_0000273094" description="Large ribosomal subunit protein mL52">
    <location>
        <begin position="23"/>
        <end position="121"/>
    </location>
</feature>
<feature type="region of interest" description="Disordered" evidence="3">
    <location>
        <begin position="98"/>
        <end position="121"/>
    </location>
</feature>
<feature type="compositionally biased region" description="Basic and acidic residues" evidence="3">
    <location>
        <begin position="98"/>
        <end position="109"/>
    </location>
</feature>
<feature type="splice variant" id="VSP_022476" description="In isoform 2." evidence="4">
    <location>
        <begin position="1"/>
        <end position="58"/>
    </location>
</feature>
<accession>Q9D0Y8</accession>
<accession>Q6PAU6</accession>
<proteinExistence type="evidence at protein level"/>
<protein>
    <recommendedName>
        <fullName evidence="5">Large ribosomal subunit protein mL52</fullName>
    </recommendedName>
    <alternativeName>
        <fullName>39S ribosomal protein L52, mitochondrial</fullName>
        <shortName>L52mt</shortName>
        <shortName>MRP-L52</shortName>
    </alternativeName>
</protein>
<evidence type="ECO:0000250" key="1">
    <source>
        <dbReference type="UniProtKB" id="Q86TS9"/>
    </source>
</evidence>
<evidence type="ECO:0000255" key="2"/>
<evidence type="ECO:0000256" key="3">
    <source>
        <dbReference type="SAM" id="MobiDB-lite"/>
    </source>
</evidence>
<evidence type="ECO:0000303" key="4">
    <source>
    </source>
</evidence>
<evidence type="ECO:0000305" key="5"/>
<organism>
    <name type="scientific">Mus musculus</name>
    <name type="common">Mouse</name>
    <dbReference type="NCBI Taxonomy" id="10090"/>
    <lineage>
        <taxon>Eukaryota</taxon>
        <taxon>Metazoa</taxon>
        <taxon>Chordata</taxon>
        <taxon>Craniata</taxon>
        <taxon>Vertebrata</taxon>
        <taxon>Euteleostomi</taxon>
        <taxon>Mammalia</taxon>
        <taxon>Eutheria</taxon>
        <taxon>Euarchontoglires</taxon>
        <taxon>Glires</taxon>
        <taxon>Rodentia</taxon>
        <taxon>Myomorpha</taxon>
        <taxon>Muroidea</taxon>
        <taxon>Muridae</taxon>
        <taxon>Murinae</taxon>
        <taxon>Mus</taxon>
        <taxon>Mus</taxon>
    </lineage>
</organism>
<name>RM52_MOUSE</name>
<gene>
    <name type="primary">Mrpl52</name>
</gene>
<keyword id="KW-0025">Alternative splicing</keyword>
<keyword id="KW-0496">Mitochondrion</keyword>
<keyword id="KW-1185">Reference proteome</keyword>
<keyword id="KW-0687">Ribonucleoprotein</keyword>
<keyword id="KW-0689">Ribosomal protein</keyword>
<keyword id="KW-0809">Transit peptide</keyword>